<gene>
    <name evidence="1" type="primary">rpmE2</name>
    <name type="ordered locus">SP70585_1364</name>
</gene>
<reference key="1">
    <citation type="journal article" date="2010" name="Genome Biol.">
        <title>Structure and dynamics of the pan-genome of Streptococcus pneumoniae and closely related species.</title>
        <authorList>
            <person name="Donati C."/>
            <person name="Hiller N.L."/>
            <person name="Tettelin H."/>
            <person name="Muzzi A."/>
            <person name="Croucher N.J."/>
            <person name="Angiuoli S.V."/>
            <person name="Oggioni M."/>
            <person name="Dunning Hotopp J.C."/>
            <person name="Hu F.Z."/>
            <person name="Riley D.R."/>
            <person name="Covacci A."/>
            <person name="Mitchell T.J."/>
            <person name="Bentley S.D."/>
            <person name="Kilian M."/>
            <person name="Ehrlich G.D."/>
            <person name="Rappuoli R."/>
            <person name="Moxon E.R."/>
            <person name="Masignani V."/>
        </authorList>
    </citation>
    <scope>NUCLEOTIDE SEQUENCE [LARGE SCALE GENOMIC DNA]</scope>
    <source>
        <strain>70585</strain>
    </source>
</reference>
<feature type="chain" id="PRO_1000176994" description="Large ribosomal subunit protein bL31B">
    <location>
        <begin position="1"/>
        <end position="80"/>
    </location>
</feature>
<comment type="subunit">
    <text evidence="1">Part of the 50S ribosomal subunit.</text>
</comment>
<comment type="similarity">
    <text evidence="1">Belongs to the bacterial ribosomal protein bL31 family. Type B subfamily.</text>
</comment>
<protein>
    <recommendedName>
        <fullName evidence="1">Large ribosomal subunit protein bL31B</fullName>
    </recommendedName>
    <alternativeName>
        <fullName evidence="2">50S ribosomal protein L31 type B</fullName>
    </alternativeName>
</protein>
<keyword id="KW-0687">Ribonucleoprotein</keyword>
<keyword id="KW-0689">Ribosomal protein</keyword>
<sequence length="80" mass="9358">MKKDIHPEYRPVVFMDTTTGYQFLSGSTKRSNETVEFEGETYPLIRVEISSDSHPFYTGRQKFTQADGRVDRFNKKYGLK</sequence>
<accession>C1C7S8</accession>
<name>RL31B_STRP7</name>
<organism>
    <name type="scientific">Streptococcus pneumoniae (strain 70585)</name>
    <dbReference type="NCBI Taxonomy" id="488221"/>
    <lineage>
        <taxon>Bacteria</taxon>
        <taxon>Bacillati</taxon>
        <taxon>Bacillota</taxon>
        <taxon>Bacilli</taxon>
        <taxon>Lactobacillales</taxon>
        <taxon>Streptococcaceae</taxon>
        <taxon>Streptococcus</taxon>
    </lineage>
</organism>
<evidence type="ECO:0000255" key="1">
    <source>
        <dbReference type="HAMAP-Rule" id="MF_00502"/>
    </source>
</evidence>
<evidence type="ECO:0000305" key="2"/>
<proteinExistence type="inferred from homology"/>
<dbReference type="EMBL" id="CP000918">
    <property type="protein sequence ID" value="ACO16407.1"/>
    <property type="molecule type" value="Genomic_DNA"/>
</dbReference>
<dbReference type="RefSeq" id="WP_000710764.1">
    <property type="nucleotide sequence ID" value="NC_012468.1"/>
</dbReference>
<dbReference type="SMR" id="C1C7S8"/>
<dbReference type="KEGG" id="snm:SP70585_1364"/>
<dbReference type="HOGENOM" id="CLU_114306_2_2_9"/>
<dbReference type="Proteomes" id="UP000002211">
    <property type="component" value="Chromosome"/>
</dbReference>
<dbReference type="GO" id="GO:1990904">
    <property type="term" value="C:ribonucleoprotein complex"/>
    <property type="evidence" value="ECO:0007669"/>
    <property type="project" value="UniProtKB-KW"/>
</dbReference>
<dbReference type="GO" id="GO:0005840">
    <property type="term" value="C:ribosome"/>
    <property type="evidence" value="ECO:0007669"/>
    <property type="project" value="UniProtKB-KW"/>
</dbReference>
<dbReference type="GO" id="GO:0003735">
    <property type="term" value="F:structural constituent of ribosome"/>
    <property type="evidence" value="ECO:0007669"/>
    <property type="project" value="InterPro"/>
</dbReference>
<dbReference type="GO" id="GO:0006412">
    <property type="term" value="P:translation"/>
    <property type="evidence" value="ECO:0007669"/>
    <property type="project" value="UniProtKB-UniRule"/>
</dbReference>
<dbReference type="Gene3D" id="4.10.830.30">
    <property type="entry name" value="Ribosomal protein L31"/>
    <property type="match status" value="1"/>
</dbReference>
<dbReference type="HAMAP" id="MF_00502">
    <property type="entry name" value="Ribosomal_bL31_2"/>
    <property type="match status" value="1"/>
</dbReference>
<dbReference type="InterPro" id="IPR034704">
    <property type="entry name" value="Ribosomal_bL28/bL31-like_sf"/>
</dbReference>
<dbReference type="InterPro" id="IPR002150">
    <property type="entry name" value="Ribosomal_bL31"/>
</dbReference>
<dbReference type="InterPro" id="IPR027493">
    <property type="entry name" value="Ribosomal_bL31_B"/>
</dbReference>
<dbReference type="InterPro" id="IPR042105">
    <property type="entry name" value="Ribosomal_bL31_sf"/>
</dbReference>
<dbReference type="NCBIfam" id="TIGR00105">
    <property type="entry name" value="L31"/>
    <property type="match status" value="1"/>
</dbReference>
<dbReference type="NCBIfam" id="NF002462">
    <property type="entry name" value="PRK01678.1"/>
    <property type="match status" value="1"/>
</dbReference>
<dbReference type="PANTHER" id="PTHR33280">
    <property type="entry name" value="50S RIBOSOMAL PROTEIN L31, CHLOROPLASTIC"/>
    <property type="match status" value="1"/>
</dbReference>
<dbReference type="PANTHER" id="PTHR33280:SF1">
    <property type="entry name" value="LARGE RIBOSOMAL SUBUNIT PROTEIN BL31C"/>
    <property type="match status" value="1"/>
</dbReference>
<dbReference type="Pfam" id="PF01197">
    <property type="entry name" value="Ribosomal_L31"/>
    <property type="match status" value="1"/>
</dbReference>
<dbReference type="PRINTS" id="PR01249">
    <property type="entry name" value="RIBOSOMALL31"/>
</dbReference>
<dbReference type="SUPFAM" id="SSF143800">
    <property type="entry name" value="L28p-like"/>
    <property type="match status" value="1"/>
</dbReference>
<dbReference type="PROSITE" id="PS01143">
    <property type="entry name" value="RIBOSOMAL_L31"/>
    <property type="match status" value="1"/>
</dbReference>